<accession>B3PWH4</accession>
<protein>
    <recommendedName>
        <fullName evidence="1">Phosphoenolpyruvate carboxykinase (ATP)</fullName>
        <shortName evidence="1">PCK</shortName>
        <shortName evidence="1">PEP carboxykinase</shortName>
        <shortName evidence="1">PEPCK</shortName>
        <ecNumber evidence="1">4.1.1.49</ecNumber>
    </recommendedName>
</protein>
<feature type="chain" id="PRO_1000125083" description="Phosphoenolpyruvate carboxykinase (ATP)">
    <location>
        <begin position="1"/>
        <end position="536"/>
    </location>
</feature>
<feature type="binding site" evidence="1">
    <location>
        <position position="61"/>
    </location>
    <ligand>
        <name>substrate</name>
    </ligand>
</feature>
<feature type="binding site" evidence="1">
    <location>
        <position position="195"/>
    </location>
    <ligand>
        <name>substrate</name>
    </ligand>
</feature>
<feature type="binding site" evidence="1">
    <location>
        <position position="201"/>
    </location>
    <ligand>
        <name>ATP</name>
        <dbReference type="ChEBI" id="CHEBI:30616"/>
    </ligand>
</feature>
<feature type="binding site" evidence="1">
    <location>
        <position position="201"/>
    </location>
    <ligand>
        <name>Mn(2+)</name>
        <dbReference type="ChEBI" id="CHEBI:29035"/>
    </ligand>
</feature>
<feature type="binding site" evidence="1">
    <location>
        <position position="201"/>
    </location>
    <ligand>
        <name>substrate</name>
    </ligand>
</feature>
<feature type="binding site" evidence="1">
    <location>
        <position position="220"/>
    </location>
    <ligand>
        <name>ATP</name>
        <dbReference type="ChEBI" id="CHEBI:30616"/>
    </ligand>
</feature>
<feature type="binding site" evidence="1">
    <location>
        <position position="220"/>
    </location>
    <ligand>
        <name>Mn(2+)</name>
        <dbReference type="ChEBI" id="CHEBI:29035"/>
    </ligand>
</feature>
<feature type="binding site" evidence="1">
    <location>
        <begin position="236"/>
        <end position="244"/>
    </location>
    <ligand>
        <name>ATP</name>
        <dbReference type="ChEBI" id="CHEBI:30616"/>
    </ligand>
</feature>
<feature type="binding site" evidence="1">
    <location>
        <position position="257"/>
    </location>
    <ligand>
        <name>Mn(2+)</name>
        <dbReference type="ChEBI" id="CHEBI:29035"/>
    </ligand>
</feature>
<feature type="binding site" evidence="1">
    <location>
        <position position="285"/>
    </location>
    <ligand>
        <name>ATP</name>
        <dbReference type="ChEBI" id="CHEBI:30616"/>
    </ligand>
</feature>
<feature type="binding site" evidence="1">
    <location>
        <position position="322"/>
    </location>
    <ligand>
        <name>ATP</name>
        <dbReference type="ChEBI" id="CHEBI:30616"/>
    </ligand>
</feature>
<feature type="binding site" evidence="1">
    <location>
        <position position="322"/>
    </location>
    <ligand>
        <name>substrate</name>
    </ligand>
</feature>
<feature type="binding site" evidence="1">
    <location>
        <position position="447"/>
    </location>
    <ligand>
        <name>ATP</name>
        <dbReference type="ChEBI" id="CHEBI:30616"/>
    </ligand>
</feature>
<dbReference type="EC" id="4.1.1.49" evidence="1"/>
<dbReference type="EMBL" id="CP001074">
    <property type="protein sequence ID" value="ACE89042.1"/>
    <property type="molecule type" value="Genomic_DNA"/>
</dbReference>
<dbReference type="SMR" id="B3PWH4"/>
<dbReference type="KEGG" id="rec:RHECIAT_CH0000039"/>
<dbReference type="eggNOG" id="COG1866">
    <property type="taxonomic scope" value="Bacteria"/>
</dbReference>
<dbReference type="HOGENOM" id="CLU_018247_0_1_5"/>
<dbReference type="UniPathway" id="UPA00138"/>
<dbReference type="Proteomes" id="UP000008817">
    <property type="component" value="Chromosome"/>
</dbReference>
<dbReference type="GO" id="GO:0005829">
    <property type="term" value="C:cytosol"/>
    <property type="evidence" value="ECO:0007669"/>
    <property type="project" value="TreeGrafter"/>
</dbReference>
<dbReference type="GO" id="GO:0005524">
    <property type="term" value="F:ATP binding"/>
    <property type="evidence" value="ECO:0007669"/>
    <property type="project" value="UniProtKB-UniRule"/>
</dbReference>
<dbReference type="GO" id="GO:0046872">
    <property type="term" value="F:metal ion binding"/>
    <property type="evidence" value="ECO:0007669"/>
    <property type="project" value="UniProtKB-KW"/>
</dbReference>
<dbReference type="GO" id="GO:0004612">
    <property type="term" value="F:phosphoenolpyruvate carboxykinase (ATP) activity"/>
    <property type="evidence" value="ECO:0007669"/>
    <property type="project" value="UniProtKB-UniRule"/>
</dbReference>
<dbReference type="GO" id="GO:0006094">
    <property type="term" value="P:gluconeogenesis"/>
    <property type="evidence" value="ECO:0007669"/>
    <property type="project" value="UniProtKB-UniRule"/>
</dbReference>
<dbReference type="CDD" id="cd00484">
    <property type="entry name" value="PEPCK_ATP"/>
    <property type="match status" value="1"/>
</dbReference>
<dbReference type="Gene3D" id="3.90.228.20">
    <property type="match status" value="1"/>
</dbReference>
<dbReference type="Gene3D" id="3.40.449.10">
    <property type="entry name" value="Phosphoenolpyruvate Carboxykinase, domain 1"/>
    <property type="match status" value="1"/>
</dbReference>
<dbReference type="Gene3D" id="2.170.8.10">
    <property type="entry name" value="Phosphoenolpyruvate Carboxykinase, domain 2"/>
    <property type="match status" value="1"/>
</dbReference>
<dbReference type="HAMAP" id="MF_00453">
    <property type="entry name" value="PEPCK_ATP"/>
    <property type="match status" value="1"/>
</dbReference>
<dbReference type="InterPro" id="IPR001272">
    <property type="entry name" value="PEP_carboxykinase_ATP"/>
</dbReference>
<dbReference type="InterPro" id="IPR013035">
    <property type="entry name" value="PEP_carboxykinase_C"/>
</dbReference>
<dbReference type="InterPro" id="IPR008210">
    <property type="entry name" value="PEP_carboxykinase_N"/>
</dbReference>
<dbReference type="InterPro" id="IPR015994">
    <property type="entry name" value="PEPCK_ATP_CS"/>
</dbReference>
<dbReference type="NCBIfam" id="TIGR00224">
    <property type="entry name" value="pckA"/>
    <property type="match status" value="1"/>
</dbReference>
<dbReference type="NCBIfam" id="NF006820">
    <property type="entry name" value="PRK09344.1-2"/>
    <property type="match status" value="1"/>
</dbReference>
<dbReference type="NCBIfam" id="NF006821">
    <property type="entry name" value="PRK09344.1-3"/>
    <property type="match status" value="1"/>
</dbReference>
<dbReference type="NCBIfam" id="NF006822">
    <property type="entry name" value="PRK09344.1-4"/>
    <property type="match status" value="1"/>
</dbReference>
<dbReference type="PANTHER" id="PTHR30031:SF0">
    <property type="entry name" value="PHOSPHOENOLPYRUVATE CARBOXYKINASE (ATP)"/>
    <property type="match status" value="1"/>
</dbReference>
<dbReference type="PANTHER" id="PTHR30031">
    <property type="entry name" value="PHOSPHOENOLPYRUVATE CARBOXYKINASE ATP"/>
    <property type="match status" value="1"/>
</dbReference>
<dbReference type="Pfam" id="PF01293">
    <property type="entry name" value="PEPCK_ATP"/>
    <property type="match status" value="1"/>
</dbReference>
<dbReference type="PIRSF" id="PIRSF006294">
    <property type="entry name" value="PEP_crbxkin"/>
    <property type="match status" value="1"/>
</dbReference>
<dbReference type="SUPFAM" id="SSF68923">
    <property type="entry name" value="PEP carboxykinase N-terminal domain"/>
    <property type="match status" value="1"/>
</dbReference>
<dbReference type="SUPFAM" id="SSF53795">
    <property type="entry name" value="PEP carboxykinase-like"/>
    <property type="match status" value="1"/>
</dbReference>
<dbReference type="PROSITE" id="PS00532">
    <property type="entry name" value="PEPCK_ATP"/>
    <property type="match status" value="1"/>
</dbReference>
<gene>
    <name evidence="1" type="primary">pckA</name>
    <name type="ordered locus">RHECIAT_CH0000039</name>
</gene>
<reference key="1">
    <citation type="journal article" date="2010" name="Appl. Environ. Microbiol.">
        <title>Conserved symbiotic plasmid DNA sequences in the multireplicon pangenomic structure of Rhizobium etli.</title>
        <authorList>
            <person name="Gonzalez V."/>
            <person name="Acosta J.L."/>
            <person name="Santamaria R.I."/>
            <person name="Bustos P."/>
            <person name="Fernandez J.L."/>
            <person name="Hernandez Gonzalez I.L."/>
            <person name="Diaz R."/>
            <person name="Flores M."/>
            <person name="Palacios R."/>
            <person name="Mora J."/>
            <person name="Davila G."/>
        </authorList>
    </citation>
    <scope>NUCLEOTIDE SEQUENCE [LARGE SCALE GENOMIC DNA]</scope>
    <source>
        <strain>CIAT 652</strain>
    </source>
</reference>
<comment type="function">
    <text evidence="1">Involved in the gluconeogenesis. Catalyzes the conversion of oxaloacetate (OAA) to phosphoenolpyruvate (PEP) through direct phosphoryl transfer between the nucleoside triphosphate and OAA.</text>
</comment>
<comment type="catalytic activity">
    <reaction evidence="1">
        <text>oxaloacetate + ATP = phosphoenolpyruvate + ADP + CO2</text>
        <dbReference type="Rhea" id="RHEA:18617"/>
        <dbReference type="ChEBI" id="CHEBI:16452"/>
        <dbReference type="ChEBI" id="CHEBI:16526"/>
        <dbReference type="ChEBI" id="CHEBI:30616"/>
        <dbReference type="ChEBI" id="CHEBI:58702"/>
        <dbReference type="ChEBI" id="CHEBI:456216"/>
        <dbReference type="EC" id="4.1.1.49"/>
    </reaction>
</comment>
<comment type="cofactor">
    <cofactor evidence="1">
        <name>Mn(2+)</name>
        <dbReference type="ChEBI" id="CHEBI:29035"/>
    </cofactor>
    <text evidence="1">Binds 1 Mn(2+) ion per subunit.</text>
</comment>
<comment type="pathway">
    <text evidence="1">Carbohydrate biosynthesis; gluconeogenesis.</text>
</comment>
<comment type="subcellular location">
    <subcellularLocation>
        <location evidence="1">Cytoplasm</location>
    </subcellularLocation>
</comment>
<comment type="similarity">
    <text evidence="1">Belongs to the phosphoenolpyruvate carboxykinase (ATP) family.</text>
</comment>
<evidence type="ECO:0000255" key="1">
    <source>
        <dbReference type="HAMAP-Rule" id="MF_00453"/>
    </source>
</evidence>
<sequence length="536" mass="57525">MEKFGVHNPATELATVGLGSAASVRYNFSAAALYEESIRRGEAELTAQGALRALTGQHTGRSPRDKFVVRDANTDGEIWWDNNKPLSPEHFALLRADMLAHAAGKDLFVQDLVGGAEEGHALPTRVVTEFAWHSLFIRNLLIRPETAALATFVPKLTIIDLPSFKADPARHGCRTETVIACDLTNGLVLIGGTSYAGEMKKSVFTVLNYLLPAKGVMPMHCSANVGPDGDAAVFFGLSGTGKTTLSADPARTLIGDDEHGWSENGIFNFEGGCYAKTIRLSAEAEPEIYATTQRFGTVLENVVLNEGREPNFDDGSLTENTRCAYPMHFIPNASETGRAGHPKTIIMLTADAFGVMPPIARLTPDQAMYHFLSGYTAKVAGTEKGVVEPEATFSTCFGAPFMPRHPAEYGNLLKDLISRHGVNCWLVNTGWTGGAYGTGKRMPIKATRALLAAALSGELGQVEFRADPNFGFAVPVSVNGVDGGILDPRSTWADKTAYDVQAEKLVSMFIANFAKFEDHVDGGVRDAAPGVKVAAE</sequence>
<organism>
    <name type="scientific">Rhizobium etli (strain CIAT 652)</name>
    <dbReference type="NCBI Taxonomy" id="491916"/>
    <lineage>
        <taxon>Bacteria</taxon>
        <taxon>Pseudomonadati</taxon>
        <taxon>Pseudomonadota</taxon>
        <taxon>Alphaproteobacteria</taxon>
        <taxon>Hyphomicrobiales</taxon>
        <taxon>Rhizobiaceae</taxon>
        <taxon>Rhizobium/Agrobacterium group</taxon>
        <taxon>Rhizobium</taxon>
    </lineage>
</organism>
<proteinExistence type="inferred from homology"/>
<keyword id="KW-0067">ATP-binding</keyword>
<keyword id="KW-0963">Cytoplasm</keyword>
<keyword id="KW-0210">Decarboxylase</keyword>
<keyword id="KW-0312">Gluconeogenesis</keyword>
<keyword id="KW-0456">Lyase</keyword>
<keyword id="KW-0464">Manganese</keyword>
<keyword id="KW-0479">Metal-binding</keyword>
<keyword id="KW-0547">Nucleotide-binding</keyword>
<name>PCKA_RHIE6</name>